<dbReference type="EC" id="2.1.3.15" evidence="1"/>
<dbReference type="EMBL" id="CR954253">
    <property type="protein sequence ID" value="CAI97729.1"/>
    <property type="molecule type" value="Genomic_DNA"/>
</dbReference>
<dbReference type="RefSeq" id="WP_011543843.1">
    <property type="nucleotide sequence ID" value="NC_008054.1"/>
</dbReference>
<dbReference type="SMR" id="Q1GAF3"/>
<dbReference type="STRING" id="390333.Ldb0908"/>
<dbReference type="KEGG" id="ldb:Ldb0908"/>
<dbReference type="PATRIC" id="fig|390333.13.peg.1202"/>
<dbReference type="eggNOG" id="COG0777">
    <property type="taxonomic scope" value="Bacteria"/>
</dbReference>
<dbReference type="HOGENOM" id="CLU_015486_1_1_9"/>
<dbReference type="BioCyc" id="LDEL390333:LDB_RS03985-MONOMER"/>
<dbReference type="UniPathway" id="UPA00655">
    <property type="reaction ID" value="UER00711"/>
</dbReference>
<dbReference type="Proteomes" id="UP000001259">
    <property type="component" value="Chromosome"/>
</dbReference>
<dbReference type="GO" id="GO:0009317">
    <property type="term" value="C:acetyl-CoA carboxylase complex"/>
    <property type="evidence" value="ECO:0007669"/>
    <property type="project" value="InterPro"/>
</dbReference>
<dbReference type="GO" id="GO:0003989">
    <property type="term" value="F:acetyl-CoA carboxylase activity"/>
    <property type="evidence" value="ECO:0007669"/>
    <property type="project" value="InterPro"/>
</dbReference>
<dbReference type="GO" id="GO:0005524">
    <property type="term" value="F:ATP binding"/>
    <property type="evidence" value="ECO:0007669"/>
    <property type="project" value="UniProtKB-KW"/>
</dbReference>
<dbReference type="GO" id="GO:0016743">
    <property type="term" value="F:carboxyl- or carbamoyltransferase activity"/>
    <property type="evidence" value="ECO:0007669"/>
    <property type="project" value="UniProtKB-UniRule"/>
</dbReference>
<dbReference type="GO" id="GO:0008270">
    <property type="term" value="F:zinc ion binding"/>
    <property type="evidence" value="ECO:0007669"/>
    <property type="project" value="UniProtKB-UniRule"/>
</dbReference>
<dbReference type="GO" id="GO:0006633">
    <property type="term" value="P:fatty acid biosynthetic process"/>
    <property type="evidence" value="ECO:0007669"/>
    <property type="project" value="UniProtKB-KW"/>
</dbReference>
<dbReference type="GO" id="GO:2001295">
    <property type="term" value="P:malonyl-CoA biosynthetic process"/>
    <property type="evidence" value="ECO:0007669"/>
    <property type="project" value="UniProtKB-UniRule"/>
</dbReference>
<dbReference type="Gene3D" id="3.90.226.10">
    <property type="entry name" value="2-enoyl-CoA Hydratase, Chain A, domain 1"/>
    <property type="match status" value="1"/>
</dbReference>
<dbReference type="HAMAP" id="MF_01395">
    <property type="entry name" value="AcetylCoA_CT_beta"/>
    <property type="match status" value="1"/>
</dbReference>
<dbReference type="InterPro" id="IPR034733">
    <property type="entry name" value="AcCoA_carboxyl_beta"/>
</dbReference>
<dbReference type="InterPro" id="IPR000438">
    <property type="entry name" value="Acetyl_CoA_COase_Trfase_b_su"/>
</dbReference>
<dbReference type="InterPro" id="IPR029045">
    <property type="entry name" value="ClpP/crotonase-like_dom_sf"/>
</dbReference>
<dbReference type="InterPro" id="IPR011762">
    <property type="entry name" value="COA_CT_N"/>
</dbReference>
<dbReference type="PANTHER" id="PTHR42995">
    <property type="entry name" value="ACETYL-COENZYME A CARBOXYLASE CARBOXYL TRANSFERASE SUBUNIT BETA, CHLOROPLASTIC"/>
    <property type="match status" value="1"/>
</dbReference>
<dbReference type="PANTHER" id="PTHR42995:SF5">
    <property type="entry name" value="ACETYL-COENZYME A CARBOXYLASE CARBOXYL TRANSFERASE SUBUNIT BETA, CHLOROPLASTIC"/>
    <property type="match status" value="1"/>
</dbReference>
<dbReference type="Pfam" id="PF01039">
    <property type="entry name" value="Carboxyl_trans"/>
    <property type="match status" value="1"/>
</dbReference>
<dbReference type="PRINTS" id="PR01070">
    <property type="entry name" value="ACCCTRFRASEB"/>
</dbReference>
<dbReference type="SUPFAM" id="SSF52096">
    <property type="entry name" value="ClpP/crotonase"/>
    <property type="match status" value="1"/>
</dbReference>
<dbReference type="PROSITE" id="PS50980">
    <property type="entry name" value="COA_CT_NTER"/>
    <property type="match status" value="1"/>
</dbReference>
<keyword id="KW-0067">ATP-binding</keyword>
<keyword id="KW-0963">Cytoplasm</keyword>
<keyword id="KW-0275">Fatty acid biosynthesis</keyword>
<keyword id="KW-0276">Fatty acid metabolism</keyword>
<keyword id="KW-0444">Lipid biosynthesis</keyword>
<keyword id="KW-0443">Lipid metabolism</keyword>
<keyword id="KW-0479">Metal-binding</keyword>
<keyword id="KW-0547">Nucleotide-binding</keyword>
<keyword id="KW-1185">Reference proteome</keyword>
<keyword id="KW-0808">Transferase</keyword>
<keyword id="KW-0862">Zinc</keyword>
<keyword id="KW-0863">Zinc-finger</keyword>
<organism>
    <name type="scientific">Lactobacillus delbrueckii subsp. bulgaricus (strain ATCC 11842 / DSM 20081 / BCRC 10696 / JCM 1002 / NBRC 13953 / NCIMB 11778 / NCTC 12712 / WDCM 00102 / Lb 14)</name>
    <dbReference type="NCBI Taxonomy" id="390333"/>
    <lineage>
        <taxon>Bacteria</taxon>
        <taxon>Bacillati</taxon>
        <taxon>Bacillota</taxon>
        <taxon>Bacilli</taxon>
        <taxon>Lactobacillales</taxon>
        <taxon>Lactobacillaceae</taxon>
        <taxon>Lactobacillus</taxon>
    </lineage>
</organism>
<accession>Q1GAF3</accession>
<proteinExistence type="inferred from homology"/>
<name>ACCD_LACDA</name>
<protein>
    <recommendedName>
        <fullName evidence="1">Acetyl-coenzyme A carboxylase carboxyl transferase subunit beta</fullName>
        <shortName evidence="1">ACCase subunit beta</shortName>
        <shortName evidence="1">Acetyl-CoA carboxylase carboxyltransferase subunit beta</shortName>
        <ecNumber evidence="1">2.1.3.15</ecNumber>
    </recommendedName>
</protein>
<gene>
    <name evidence="1" type="primary">accD</name>
    <name type="ordered locus">Ldb0908</name>
</gene>
<evidence type="ECO:0000255" key="1">
    <source>
        <dbReference type="HAMAP-Rule" id="MF_01395"/>
    </source>
</evidence>
<evidence type="ECO:0000255" key="2">
    <source>
        <dbReference type="PROSITE-ProRule" id="PRU01136"/>
    </source>
</evidence>
<reference key="1">
    <citation type="journal article" date="2006" name="Proc. Natl. Acad. Sci. U.S.A.">
        <title>The complete genome sequence of Lactobacillus bulgaricus reveals extensive and ongoing reductive evolution.</title>
        <authorList>
            <person name="van de Guchte M."/>
            <person name="Penaud S."/>
            <person name="Grimaldi C."/>
            <person name="Barbe V."/>
            <person name="Bryson K."/>
            <person name="Nicolas P."/>
            <person name="Robert C."/>
            <person name="Oztas S."/>
            <person name="Mangenot S."/>
            <person name="Couloux A."/>
            <person name="Loux V."/>
            <person name="Dervyn R."/>
            <person name="Bossy R."/>
            <person name="Bolotin A."/>
            <person name="Batto J.-M."/>
            <person name="Walunas T."/>
            <person name="Gibrat J.-F."/>
            <person name="Bessieres P."/>
            <person name="Weissenbach J."/>
            <person name="Ehrlich S.D."/>
            <person name="Maguin E."/>
        </authorList>
    </citation>
    <scope>NUCLEOTIDE SEQUENCE [LARGE SCALE GENOMIC DNA]</scope>
    <source>
        <strain>ATCC 11842 / DSM 20081 / BCRC 10696 / JCM 1002 / NBRC 13953 / NCIMB 11778 / NCTC 12712 / WDCM 00102 / Lb 14</strain>
    </source>
</reference>
<sequence length="282" mass="31551">MRLFKKRNTISERHVKANKRAEDLVPSGLMKRCPNCGLEFFARRLDKYKTCPDCDYGFRLTARERLAWLCEESEEWFKDIQPSDPLHFPNYEAKVAAGKKKTGLNEAVWTGLAKIGGQETALAIMDPFFIMGSLGQMTGEKLTRLIEAATEKRLPVVVFTASGGARMQEGIYSLMQMAKVVNAINRHKAAGLLYLVVLTDPTTGGVTASFASEGDITLAEAHAMVAFAGRRVIEQTIHEQLPKDAQRAETVLKHGFIDRIVLRQEEKETLAWLLKYGGMQDD</sequence>
<comment type="function">
    <text evidence="1">Component of the acetyl coenzyme A carboxylase (ACC) complex. Biotin carboxylase (BC) catalyzes the carboxylation of biotin on its carrier protein (BCCP) and then the CO(2) group is transferred by the transcarboxylase to acetyl-CoA to form malonyl-CoA.</text>
</comment>
<comment type="catalytic activity">
    <reaction evidence="1">
        <text>N(6)-carboxybiotinyl-L-lysyl-[protein] + acetyl-CoA = N(6)-biotinyl-L-lysyl-[protein] + malonyl-CoA</text>
        <dbReference type="Rhea" id="RHEA:54728"/>
        <dbReference type="Rhea" id="RHEA-COMP:10505"/>
        <dbReference type="Rhea" id="RHEA-COMP:10506"/>
        <dbReference type="ChEBI" id="CHEBI:57288"/>
        <dbReference type="ChEBI" id="CHEBI:57384"/>
        <dbReference type="ChEBI" id="CHEBI:83144"/>
        <dbReference type="ChEBI" id="CHEBI:83145"/>
        <dbReference type="EC" id="2.1.3.15"/>
    </reaction>
</comment>
<comment type="cofactor">
    <cofactor evidence="1">
        <name>Zn(2+)</name>
        <dbReference type="ChEBI" id="CHEBI:29105"/>
    </cofactor>
    <text evidence="1">Binds 1 zinc ion per subunit.</text>
</comment>
<comment type="pathway">
    <text evidence="1">Lipid metabolism; malonyl-CoA biosynthesis; malonyl-CoA from acetyl-CoA: step 1/1.</text>
</comment>
<comment type="subunit">
    <text evidence="1">Acetyl-CoA carboxylase is a heterohexamer composed of biotin carboxyl carrier protein (AccB), biotin carboxylase (AccC) and two subunits each of ACCase subunit alpha (AccA) and ACCase subunit beta (AccD).</text>
</comment>
<comment type="subcellular location">
    <subcellularLocation>
        <location evidence="1">Cytoplasm</location>
    </subcellularLocation>
</comment>
<comment type="similarity">
    <text evidence="1">Belongs to the AccD/PCCB family.</text>
</comment>
<feature type="chain" id="PRO_0000389763" description="Acetyl-coenzyme A carboxylase carboxyl transferase subunit beta">
    <location>
        <begin position="1"/>
        <end position="282"/>
    </location>
</feature>
<feature type="domain" description="CoA carboxyltransferase N-terminal" evidence="2">
    <location>
        <begin position="29"/>
        <end position="282"/>
    </location>
</feature>
<feature type="zinc finger region" description="C4-type" evidence="1">
    <location>
        <begin position="33"/>
        <end position="54"/>
    </location>
</feature>
<feature type="binding site" evidence="1">
    <location>
        <position position="33"/>
    </location>
    <ligand>
        <name>Zn(2+)</name>
        <dbReference type="ChEBI" id="CHEBI:29105"/>
    </ligand>
</feature>
<feature type="binding site" evidence="1">
    <location>
        <position position="36"/>
    </location>
    <ligand>
        <name>Zn(2+)</name>
        <dbReference type="ChEBI" id="CHEBI:29105"/>
    </ligand>
</feature>
<feature type="binding site" evidence="1">
    <location>
        <position position="51"/>
    </location>
    <ligand>
        <name>Zn(2+)</name>
        <dbReference type="ChEBI" id="CHEBI:29105"/>
    </ligand>
</feature>
<feature type="binding site" evidence="1">
    <location>
        <position position="54"/>
    </location>
    <ligand>
        <name>Zn(2+)</name>
        <dbReference type="ChEBI" id="CHEBI:29105"/>
    </ligand>
</feature>